<protein>
    <recommendedName>
        <fullName evidence="1">Small ribosomal subunit protein uS8</fullName>
    </recommendedName>
    <alternativeName>
        <fullName evidence="2">30S ribosomal protein S8</fullName>
    </alternativeName>
</protein>
<organism>
    <name type="scientific">Cellvibrio japonicus (strain Ueda107)</name>
    <name type="common">Pseudomonas fluorescens subsp. cellulosa</name>
    <dbReference type="NCBI Taxonomy" id="498211"/>
    <lineage>
        <taxon>Bacteria</taxon>
        <taxon>Pseudomonadati</taxon>
        <taxon>Pseudomonadota</taxon>
        <taxon>Gammaproteobacteria</taxon>
        <taxon>Cellvibrionales</taxon>
        <taxon>Cellvibrionaceae</taxon>
        <taxon>Cellvibrio</taxon>
    </lineage>
</organism>
<proteinExistence type="inferred from homology"/>
<comment type="function">
    <text evidence="1">One of the primary rRNA binding proteins, it binds directly to 16S rRNA central domain where it helps coordinate assembly of the platform of the 30S subunit.</text>
</comment>
<comment type="subunit">
    <text evidence="1">Part of the 30S ribosomal subunit. Contacts proteins S5 and S12.</text>
</comment>
<comment type="similarity">
    <text evidence="1">Belongs to the universal ribosomal protein uS8 family.</text>
</comment>
<sequence>MSMQDPLADMLTRIRNAQGVGKATVTMPSSKLKVSVAKVLSDEGYINGFSVSESPKQELTVELKYFEGKPVIAELDRVSRPGLRNYAGKSALPTVRGGLGIAIVSTSKGVMTDRAARAAGVGGEVLCTVF</sequence>
<evidence type="ECO:0000255" key="1">
    <source>
        <dbReference type="HAMAP-Rule" id="MF_01302"/>
    </source>
</evidence>
<evidence type="ECO:0000305" key="2"/>
<accession>B3PK51</accession>
<reference key="1">
    <citation type="journal article" date="2008" name="J. Bacteriol.">
        <title>Insights into plant cell wall degradation from the genome sequence of the soil bacterium Cellvibrio japonicus.</title>
        <authorList>
            <person name="DeBoy R.T."/>
            <person name="Mongodin E.F."/>
            <person name="Fouts D.E."/>
            <person name="Tailford L.E."/>
            <person name="Khouri H."/>
            <person name="Emerson J.B."/>
            <person name="Mohamoud Y."/>
            <person name="Watkins K."/>
            <person name="Henrissat B."/>
            <person name="Gilbert H.J."/>
            <person name="Nelson K.E."/>
        </authorList>
    </citation>
    <scope>NUCLEOTIDE SEQUENCE [LARGE SCALE GENOMIC DNA]</scope>
    <source>
        <strain>Ueda107</strain>
    </source>
</reference>
<dbReference type="EMBL" id="CP000934">
    <property type="protein sequence ID" value="ACE83351.1"/>
    <property type="molecule type" value="Genomic_DNA"/>
</dbReference>
<dbReference type="RefSeq" id="WP_012486376.1">
    <property type="nucleotide sequence ID" value="NC_010995.1"/>
</dbReference>
<dbReference type="SMR" id="B3PK51"/>
<dbReference type="STRING" id="498211.CJA_0713"/>
<dbReference type="KEGG" id="cja:CJA_0713"/>
<dbReference type="eggNOG" id="COG0096">
    <property type="taxonomic scope" value="Bacteria"/>
</dbReference>
<dbReference type="HOGENOM" id="CLU_098428_0_0_6"/>
<dbReference type="OrthoDB" id="9802617at2"/>
<dbReference type="Proteomes" id="UP000001036">
    <property type="component" value="Chromosome"/>
</dbReference>
<dbReference type="GO" id="GO:1990904">
    <property type="term" value="C:ribonucleoprotein complex"/>
    <property type="evidence" value="ECO:0007669"/>
    <property type="project" value="UniProtKB-KW"/>
</dbReference>
<dbReference type="GO" id="GO:0005840">
    <property type="term" value="C:ribosome"/>
    <property type="evidence" value="ECO:0007669"/>
    <property type="project" value="UniProtKB-KW"/>
</dbReference>
<dbReference type="GO" id="GO:0019843">
    <property type="term" value="F:rRNA binding"/>
    <property type="evidence" value="ECO:0007669"/>
    <property type="project" value="UniProtKB-UniRule"/>
</dbReference>
<dbReference type="GO" id="GO:0003735">
    <property type="term" value="F:structural constituent of ribosome"/>
    <property type="evidence" value="ECO:0007669"/>
    <property type="project" value="InterPro"/>
</dbReference>
<dbReference type="GO" id="GO:0006412">
    <property type="term" value="P:translation"/>
    <property type="evidence" value="ECO:0007669"/>
    <property type="project" value="UniProtKB-UniRule"/>
</dbReference>
<dbReference type="FunFam" id="3.30.1370.30:FF:000002">
    <property type="entry name" value="30S ribosomal protein S8"/>
    <property type="match status" value="1"/>
</dbReference>
<dbReference type="FunFam" id="3.30.1490.10:FF:000001">
    <property type="entry name" value="30S ribosomal protein S8"/>
    <property type="match status" value="1"/>
</dbReference>
<dbReference type="Gene3D" id="3.30.1370.30">
    <property type="match status" value="1"/>
</dbReference>
<dbReference type="Gene3D" id="3.30.1490.10">
    <property type="match status" value="1"/>
</dbReference>
<dbReference type="HAMAP" id="MF_01302_B">
    <property type="entry name" value="Ribosomal_uS8_B"/>
    <property type="match status" value="1"/>
</dbReference>
<dbReference type="InterPro" id="IPR000630">
    <property type="entry name" value="Ribosomal_uS8"/>
</dbReference>
<dbReference type="InterPro" id="IPR047863">
    <property type="entry name" value="Ribosomal_uS8_CS"/>
</dbReference>
<dbReference type="InterPro" id="IPR035987">
    <property type="entry name" value="Ribosomal_uS8_sf"/>
</dbReference>
<dbReference type="NCBIfam" id="NF001109">
    <property type="entry name" value="PRK00136.1"/>
    <property type="match status" value="1"/>
</dbReference>
<dbReference type="PANTHER" id="PTHR11758">
    <property type="entry name" value="40S RIBOSOMAL PROTEIN S15A"/>
    <property type="match status" value="1"/>
</dbReference>
<dbReference type="Pfam" id="PF00410">
    <property type="entry name" value="Ribosomal_S8"/>
    <property type="match status" value="1"/>
</dbReference>
<dbReference type="SUPFAM" id="SSF56047">
    <property type="entry name" value="Ribosomal protein S8"/>
    <property type="match status" value="1"/>
</dbReference>
<dbReference type="PROSITE" id="PS00053">
    <property type="entry name" value="RIBOSOMAL_S8"/>
    <property type="match status" value="1"/>
</dbReference>
<name>RS8_CELJU</name>
<gene>
    <name evidence="1" type="primary">rpsH</name>
    <name type="ordered locus">CJA_0713</name>
</gene>
<keyword id="KW-1185">Reference proteome</keyword>
<keyword id="KW-0687">Ribonucleoprotein</keyword>
<keyword id="KW-0689">Ribosomal protein</keyword>
<keyword id="KW-0694">RNA-binding</keyword>
<keyword id="KW-0699">rRNA-binding</keyword>
<feature type="chain" id="PRO_1000140527" description="Small ribosomal subunit protein uS8">
    <location>
        <begin position="1"/>
        <end position="130"/>
    </location>
</feature>